<comment type="function">
    <text evidence="1">One of the primary rRNA binding proteins, this protein initially binds near the 5'-end of the 23S rRNA. It is important during the early stages of 50S assembly. It makes multiple contacts with different domains of the 23S rRNA in the assembled 50S subunit and ribosome.</text>
</comment>
<comment type="function">
    <text evidence="1">Forms part of the polypeptide exit tunnel.</text>
</comment>
<comment type="subunit">
    <text evidence="1">Part of the 50S ribosomal subunit.</text>
</comment>
<comment type="similarity">
    <text evidence="1">Belongs to the universal ribosomal protein uL4 family.</text>
</comment>
<dbReference type="EMBL" id="CP000679">
    <property type="protein sequence ID" value="ABP67864.1"/>
    <property type="molecule type" value="Genomic_DNA"/>
</dbReference>
<dbReference type="RefSeq" id="WP_011917790.1">
    <property type="nucleotide sequence ID" value="NC_009437.1"/>
</dbReference>
<dbReference type="SMR" id="A4XLS9"/>
<dbReference type="STRING" id="351627.Csac_2286"/>
<dbReference type="KEGG" id="csc:Csac_2286"/>
<dbReference type="eggNOG" id="COG0088">
    <property type="taxonomic scope" value="Bacteria"/>
</dbReference>
<dbReference type="HOGENOM" id="CLU_041575_5_2_9"/>
<dbReference type="OrthoDB" id="9803201at2"/>
<dbReference type="Proteomes" id="UP000000256">
    <property type="component" value="Chromosome"/>
</dbReference>
<dbReference type="GO" id="GO:1990904">
    <property type="term" value="C:ribonucleoprotein complex"/>
    <property type="evidence" value="ECO:0007669"/>
    <property type="project" value="UniProtKB-KW"/>
</dbReference>
<dbReference type="GO" id="GO:0005840">
    <property type="term" value="C:ribosome"/>
    <property type="evidence" value="ECO:0007669"/>
    <property type="project" value="UniProtKB-KW"/>
</dbReference>
<dbReference type="GO" id="GO:0019843">
    <property type="term" value="F:rRNA binding"/>
    <property type="evidence" value="ECO:0007669"/>
    <property type="project" value="UniProtKB-UniRule"/>
</dbReference>
<dbReference type="GO" id="GO:0003735">
    <property type="term" value="F:structural constituent of ribosome"/>
    <property type="evidence" value="ECO:0007669"/>
    <property type="project" value="InterPro"/>
</dbReference>
<dbReference type="GO" id="GO:0006412">
    <property type="term" value="P:translation"/>
    <property type="evidence" value="ECO:0007669"/>
    <property type="project" value="UniProtKB-UniRule"/>
</dbReference>
<dbReference type="Gene3D" id="3.40.1370.10">
    <property type="match status" value="1"/>
</dbReference>
<dbReference type="HAMAP" id="MF_01328_B">
    <property type="entry name" value="Ribosomal_uL4_B"/>
    <property type="match status" value="1"/>
</dbReference>
<dbReference type="InterPro" id="IPR002136">
    <property type="entry name" value="Ribosomal_uL4"/>
</dbReference>
<dbReference type="InterPro" id="IPR013005">
    <property type="entry name" value="Ribosomal_uL4-like"/>
</dbReference>
<dbReference type="InterPro" id="IPR023574">
    <property type="entry name" value="Ribosomal_uL4_dom_sf"/>
</dbReference>
<dbReference type="NCBIfam" id="TIGR03953">
    <property type="entry name" value="rplD_bact"/>
    <property type="match status" value="1"/>
</dbReference>
<dbReference type="PANTHER" id="PTHR10746">
    <property type="entry name" value="50S RIBOSOMAL PROTEIN L4"/>
    <property type="match status" value="1"/>
</dbReference>
<dbReference type="PANTHER" id="PTHR10746:SF6">
    <property type="entry name" value="LARGE RIBOSOMAL SUBUNIT PROTEIN UL4M"/>
    <property type="match status" value="1"/>
</dbReference>
<dbReference type="Pfam" id="PF00573">
    <property type="entry name" value="Ribosomal_L4"/>
    <property type="match status" value="1"/>
</dbReference>
<dbReference type="SUPFAM" id="SSF52166">
    <property type="entry name" value="Ribosomal protein L4"/>
    <property type="match status" value="1"/>
</dbReference>
<accession>A4XLS9</accession>
<organism>
    <name type="scientific">Caldicellulosiruptor saccharolyticus (strain ATCC 43494 / DSM 8903 / Tp8T 6331)</name>
    <dbReference type="NCBI Taxonomy" id="351627"/>
    <lineage>
        <taxon>Bacteria</taxon>
        <taxon>Bacillati</taxon>
        <taxon>Bacillota</taxon>
        <taxon>Bacillota incertae sedis</taxon>
        <taxon>Caldicellulosiruptorales</taxon>
        <taxon>Caldicellulosiruptoraceae</taxon>
        <taxon>Caldicellulosiruptor</taxon>
    </lineage>
</organism>
<protein>
    <recommendedName>
        <fullName evidence="1">Large ribosomal subunit protein uL4</fullName>
    </recommendedName>
    <alternativeName>
        <fullName evidence="3">50S ribosomal protein L4</fullName>
    </alternativeName>
</protein>
<reference key="1">
    <citation type="submission" date="2007-04" db="EMBL/GenBank/DDBJ databases">
        <title>Genome sequence of the thermophilic hydrogen-producing bacterium Caldicellulosiruptor saccharolyticus DSM 8903.</title>
        <authorList>
            <person name="Copeland A."/>
            <person name="Lucas S."/>
            <person name="Lapidus A."/>
            <person name="Barry K."/>
            <person name="Detter J.C."/>
            <person name="Glavina del Rio T."/>
            <person name="Hammon N."/>
            <person name="Israni S."/>
            <person name="Dalin E."/>
            <person name="Tice H."/>
            <person name="Pitluck S."/>
            <person name="Kiss H."/>
            <person name="Brettin T."/>
            <person name="Bruce D."/>
            <person name="Han C."/>
            <person name="Schmutz J."/>
            <person name="Larimer F."/>
            <person name="Land M."/>
            <person name="Hauser L."/>
            <person name="Kyrpides N."/>
            <person name="Lykidis A."/>
            <person name="van de Werken H.J.G."/>
            <person name="Verhaart M.R.A."/>
            <person name="VanFossen A.L."/>
            <person name="Lewis D.L."/>
            <person name="Nichols J.D."/>
            <person name="Goorissen H.P."/>
            <person name="van Niel E.W.J."/>
            <person name="Stams F.J.M."/>
            <person name="Willquist K.U."/>
            <person name="Ward D.E."/>
            <person name="van der Oost J."/>
            <person name="Kelly R.M."/>
            <person name="Kengen S.M.W."/>
            <person name="Richardson P."/>
        </authorList>
    </citation>
    <scope>NUCLEOTIDE SEQUENCE [LARGE SCALE GENOMIC DNA]</scope>
    <source>
        <strain>ATCC 43494 / DSM 8903 / Tp8T 6331</strain>
    </source>
</reference>
<evidence type="ECO:0000255" key="1">
    <source>
        <dbReference type="HAMAP-Rule" id="MF_01328"/>
    </source>
</evidence>
<evidence type="ECO:0000256" key="2">
    <source>
        <dbReference type="SAM" id="MobiDB-lite"/>
    </source>
</evidence>
<evidence type="ECO:0000305" key="3"/>
<sequence length="208" mass="23708">MPKVPVYNIEGQQIGEIELNDSIFNVPINTHVLHQAVVAHLANRRQGTFAAKTRAEVRGGGRKPWRQKGTGRARQGSIRAPTWRKGGVVFAKKPRDFSIDLPKKVRRLALKCALSSKVKENNLIVLDKWDMNQYRTKEVIRVLKNLGLENEKALIVIPEKNEYLQKSTKNIPEVKTLQVGNLNVFDILKYDKFIILQDAVKKVEEVYA</sequence>
<gene>
    <name evidence="1" type="primary">rplD</name>
    <name type="ordered locus">Csac_2286</name>
</gene>
<keyword id="KW-0687">Ribonucleoprotein</keyword>
<keyword id="KW-0689">Ribosomal protein</keyword>
<keyword id="KW-0694">RNA-binding</keyword>
<keyword id="KW-0699">rRNA-binding</keyword>
<feature type="chain" id="PRO_1000052374" description="Large ribosomal subunit protein uL4">
    <location>
        <begin position="1"/>
        <end position="208"/>
    </location>
</feature>
<feature type="region of interest" description="Disordered" evidence="2">
    <location>
        <begin position="58"/>
        <end position="77"/>
    </location>
</feature>
<feature type="compositionally biased region" description="Basic residues" evidence="2">
    <location>
        <begin position="60"/>
        <end position="71"/>
    </location>
</feature>
<proteinExistence type="inferred from homology"/>
<name>RL4_CALS8</name>